<sequence length="588" mass="67246">MSFARIFITILLLFILRRAFKWLKMIVDARSIGLPMVFVPMDQTNFLWVLLSSRNRFRLQSLLPLWLWKRLSITIPGWELFEPSNPLETSPTSRTEATDTSFILVGLRTYDFWTADPQVAHEVLRRIHDFEQPRELEFLLAKFGPNVLTANGDQWARHRKIVTKVINERISKAVFESSIYYCRRILHDVLTTSPDKSSSVETTMLFDKLTQISFSILIGVGIGDKFPWYDEEKQEPEPPYQMAYKDALLTYVNNAFGVAILPPRLLNHWPSWAPGHKKMRTVGRSMTEFCMRNKSLIDQEQNRIARGETSTSSNADFIALLVQASQSGEDSQQSLSENEMISNLFAFTAGGYKTIAGALDFAVVLLARFPLWQDWLIEEVDSLIPADGDGSEPLEYTTIYPQAVRTLAFVMETERLYGSASRLFRIASGPQTIQVSSGTTVRLPAKTRVHINVVALHHLPSWRDINHQSDPDRFKPSPDAPDEKLFRPSRWINPPGSKYTHFHPPKGTFVPWSQGPRICPGQKMAQVEITTLILCLLRRHRIEPSRLEGETLQDAERGLDAKLQNVQWGGIVSLEKDPHLKFRVSQRR</sequence>
<proteinExistence type="evidence at transcript level"/>
<keyword id="KW-0325">Glycoprotein</keyword>
<keyword id="KW-0349">Heme</keyword>
<keyword id="KW-0408">Iron</keyword>
<keyword id="KW-0479">Metal-binding</keyword>
<keyword id="KW-0503">Monooxygenase</keyword>
<keyword id="KW-0560">Oxidoreductase</keyword>
<keyword id="KW-1185">Reference proteome</keyword>
<keyword id="KW-0732">Signal</keyword>
<organism>
    <name type="scientific">Leptosphaeria maculans (strain JN3 / isolate v23.1.3 / race Av1-4-5-6-7-8)</name>
    <name type="common">Blackleg fungus</name>
    <name type="synonym">Phoma lingam</name>
    <dbReference type="NCBI Taxonomy" id="985895"/>
    <lineage>
        <taxon>Eukaryota</taxon>
        <taxon>Fungi</taxon>
        <taxon>Dikarya</taxon>
        <taxon>Ascomycota</taxon>
        <taxon>Pezizomycotina</taxon>
        <taxon>Dothideomycetes</taxon>
        <taxon>Pleosporomycetidae</taxon>
        <taxon>Pleosporales</taxon>
        <taxon>Pleosporineae</taxon>
        <taxon>Leptosphaeriaceae</taxon>
        <taxon>Plenodomus</taxon>
        <taxon>Plenodomus lingam/Leptosphaeria maculans species complex</taxon>
    </lineage>
</organism>
<comment type="function">
    <text evidence="5 9">Cytochrome P450 monooxygenase; part of the gene cluster that mediates the biosynthesis of phomenoic acid, a long chain aliphatic carboxylic acid that does not appear to be essential for pathogenicity but may play a role in allowing to outcompete other fungi in the environmental niche via its antifungal properties (PubMed:23396262). The polyketide synthase produces the long methylated aliphatic carboxylic acid chain of phomenoic acid (Probable). The cluster-specific cytochrome P450 monooxygenase may then hydroxylate the methyl group of carbon 31 (Probable). The putative dehydrogenase YogA, which has no obvious role in phomenoic acid biosynthesis, may further modify phomenoic acid to produce a compound not identified yet (Probable).</text>
</comment>
<comment type="cofactor">
    <cofactor evidence="1">
        <name>heme</name>
        <dbReference type="ChEBI" id="CHEBI:30413"/>
    </cofactor>
</comment>
<comment type="pathway">
    <text evidence="9">Secondary metabolite biosynthesis.</text>
</comment>
<comment type="induction">
    <text evidence="5">Expression is positively regulated by the phomenoic acid biosynthesis cluster-specific transcription regulator C6TF.</text>
</comment>
<comment type="similarity">
    <text evidence="8">Belongs to the cytochrome P450 family.</text>
</comment>
<feature type="signal peptide" evidence="2">
    <location>
        <begin position="1"/>
        <end position="21"/>
    </location>
</feature>
<feature type="chain" id="PRO_0000446533" description="Phomenoic acid biosynthesis cluster cytochrome P450 monooxygenase" evidence="2">
    <location>
        <begin position="22"/>
        <end position="588"/>
    </location>
</feature>
<feature type="region of interest" description="Disordered" evidence="4">
    <location>
        <begin position="467"/>
        <end position="490"/>
    </location>
</feature>
<feature type="compositionally biased region" description="Basic and acidic residues" evidence="4">
    <location>
        <begin position="467"/>
        <end position="486"/>
    </location>
</feature>
<feature type="binding site" description="axial binding residue" evidence="1">
    <location>
        <position position="519"/>
    </location>
    <ligand>
        <name>heme</name>
        <dbReference type="ChEBI" id="CHEBI:30413"/>
    </ligand>
    <ligandPart>
        <name>Fe</name>
        <dbReference type="ChEBI" id="CHEBI:18248"/>
    </ligandPart>
</feature>
<feature type="glycosylation site" description="N-linked (GlcNAc...) asparagine" evidence="3">
    <location>
        <position position="293"/>
    </location>
</feature>
<gene>
    <name evidence="6" type="primary">P450</name>
    <name type="ORF">LEMA_P002670</name>
</gene>
<accession>E5AE41</accession>
<name>P450_LEPMJ</name>
<dbReference type="EC" id="1.-.-.-" evidence="9"/>
<dbReference type="EMBL" id="FP929139">
    <property type="protein sequence ID" value="CBY01480.1"/>
    <property type="molecule type" value="Genomic_DNA"/>
</dbReference>
<dbReference type="RefSeq" id="XP_003844959.1">
    <property type="nucleotide sequence ID" value="XM_003844911.1"/>
</dbReference>
<dbReference type="SMR" id="E5AE41"/>
<dbReference type="STRING" id="985895.E5AE41"/>
<dbReference type="GlyCosmos" id="E5AE41">
    <property type="glycosylation" value="1 site, No reported glycans"/>
</dbReference>
<dbReference type="EnsemblFungi" id="CBY01480">
    <property type="protein sequence ID" value="CBY01480"/>
    <property type="gene ID" value="LEMA_P002670.1"/>
</dbReference>
<dbReference type="VEuPathDB" id="FungiDB:LEMA_P002670.1"/>
<dbReference type="eggNOG" id="KOG0157">
    <property type="taxonomic scope" value="Eukaryota"/>
</dbReference>
<dbReference type="HOGENOM" id="CLU_001570_25_2_1"/>
<dbReference type="InParanoid" id="E5AE41"/>
<dbReference type="OMA" id="WQEWLFE"/>
<dbReference type="OrthoDB" id="1470350at2759"/>
<dbReference type="Proteomes" id="UP000002668">
    <property type="component" value="Genome"/>
</dbReference>
<dbReference type="GO" id="GO:0020037">
    <property type="term" value="F:heme binding"/>
    <property type="evidence" value="ECO:0007669"/>
    <property type="project" value="InterPro"/>
</dbReference>
<dbReference type="GO" id="GO:0005506">
    <property type="term" value="F:iron ion binding"/>
    <property type="evidence" value="ECO:0007669"/>
    <property type="project" value="InterPro"/>
</dbReference>
<dbReference type="GO" id="GO:0004497">
    <property type="term" value="F:monooxygenase activity"/>
    <property type="evidence" value="ECO:0007669"/>
    <property type="project" value="UniProtKB-KW"/>
</dbReference>
<dbReference type="GO" id="GO:0016705">
    <property type="term" value="F:oxidoreductase activity, acting on paired donors, with incorporation or reduction of molecular oxygen"/>
    <property type="evidence" value="ECO:0007669"/>
    <property type="project" value="InterPro"/>
</dbReference>
<dbReference type="CDD" id="cd11070">
    <property type="entry name" value="CYP56-like"/>
    <property type="match status" value="1"/>
</dbReference>
<dbReference type="Gene3D" id="1.10.630.10">
    <property type="entry name" value="Cytochrome P450"/>
    <property type="match status" value="1"/>
</dbReference>
<dbReference type="InterPro" id="IPR001128">
    <property type="entry name" value="Cyt_P450"/>
</dbReference>
<dbReference type="InterPro" id="IPR017972">
    <property type="entry name" value="Cyt_P450_CS"/>
</dbReference>
<dbReference type="InterPro" id="IPR002401">
    <property type="entry name" value="Cyt_P450_E_grp-I"/>
</dbReference>
<dbReference type="InterPro" id="IPR036396">
    <property type="entry name" value="Cyt_P450_sf"/>
</dbReference>
<dbReference type="InterPro" id="IPR050121">
    <property type="entry name" value="Cytochrome_P450_monoxygenase"/>
</dbReference>
<dbReference type="PANTHER" id="PTHR24305">
    <property type="entry name" value="CYTOCHROME P450"/>
    <property type="match status" value="1"/>
</dbReference>
<dbReference type="PANTHER" id="PTHR24305:SF166">
    <property type="entry name" value="CYTOCHROME P450 12A4, MITOCHONDRIAL-RELATED"/>
    <property type="match status" value="1"/>
</dbReference>
<dbReference type="Pfam" id="PF00067">
    <property type="entry name" value="p450"/>
    <property type="match status" value="1"/>
</dbReference>
<dbReference type="PRINTS" id="PR00463">
    <property type="entry name" value="EP450I"/>
</dbReference>
<dbReference type="PRINTS" id="PR00385">
    <property type="entry name" value="P450"/>
</dbReference>
<dbReference type="SUPFAM" id="SSF48264">
    <property type="entry name" value="Cytochrome P450"/>
    <property type="match status" value="1"/>
</dbReference>
<dbReference type="PROSITE" id="PS00086">
    <property type="entry name" value="CYTOCHROME_P450"/>
    <property type="match status" value="1"/>
</dbReference>
<evidence type="ECO:0000250" key="1">
    <source>
        <dbReference type="UniProtKB" id="P04798"/>
    </source>
</evidence>
<evidence type="ECO:0000255" key="2"/>
<evidence type="ECO:0000255" key="3">
    <source>
        <dbReference type="PROSITE-ProRule" id="PRU00498"/>
    </source>
</evidence>
<evidence type="ECO:0000256" key="4">
    <source>
        <dbReference type="SAM" id="MobiDB-lite"/>
    </source>
</evidence>
<evidence type="ECO:0000269" key="5">
    <source>
    </source>
</evidence>
<evidence type="ECO:0000303" key="6">
    <source>
    </source>
</evidence>
<evidence type="ECO:0000303" key="7">
    <source>
    </source>
</evidence>
<evidence type="ECO:0000305" key="8"/>
<evidence type="ECO:0000305" key="9">
    <source>
    </source>
</evidence>
<reference key="1">
    <citation type="journal article" date="2011" name="Nat. Commun.">
        <title>Effector diversification within compartments of the Leptosphaeria maculans genome affected by Repeat-Induced Point mutations.</title>
        <authorList>
            <person name="Rouxel T."/>
            <person name="Grandaubert J."/>
            <person name="Hane J.K."/>
            <person name="Hoede C."/>
            <person name="van de Wouw A.P."/>
            <person name="Couloux A."/>
            <person name="Dominguez V."/>
            <person name="Anthouard V."/>
            <person name="Bally P."/>
            <person name="Bourras S."/>
            <person name="Cozijnsen A.J."/>
            <person name="Ciuffetti L.M."/>
            <person name="Degrave A."/>
            <person name="Dilmaghani A."/>
            <person name="Duret L."/>
            <person name="Fudal I."/>
            <person name="Goodwin S.B."/>
            <person name="Gout L."/>
            <person name="Glaser N."/>
            <person name="Linglin J."/>
            <person name="Kema G.H.J."/>
            <person name="Lapalu N."/>
            <person name="Lawrence C.B."/>
            <person name="May K."/>
            <person name="Meyer M."/>
            <person name="Ollivier B."/>
            <person name="Poulain J."/>
            <person name="Schoch C.L."/>
            <person name="Simon A."/>
            <person name="Spatafora J.W."/>
            <person name="Stachowiak A."/>
            <person name="Turgeon B.G."/>
            <person name="Tyler B.M."/>
            <person name="Vincent D."/>
            <person name="Weissenbach J."/>
            <person name="Amselem J."/>
            <person name="Quesneville H."/>
            <person name="Oliver R.P."/>
            <person name="Wincker P."/>
            <person name="Balesdent M.-H."/>
            <person name="Howlett B.J."/>
        </authorList>
    </citation>
    <scope>NUCLEOTIDE SEQUENCE [LARGE SCALE GENOMIC DNA]</scope>
    <source>
        <strain>JN3 / isolate v23.1.3 / race Av1-4-5-6-7-8</strain>
    </source>
</reference>
<reference key="2">
    <citation type="journal article" date="2013" name="Fungal Genet. Biol.">
        <title>A gene cluster responsible for biosynthesis of phomenoic acid in the plant pathogenic fungus, Leptosphaeria maculans.</title>
        <authorList>
            <person name="Elliott C.E."/>
            <person name="Callahan D.L."/>
            <person name="Schwenk D."/>
            <person name="Nett M."/>
            <person name="Hoffmeister D."/>
            <person name="Howlett B.J."/>
        </authorList>
    </citation>
    <scope>IDENTIFICATION</scope>
    <scope>FUNCTION</scope>
    <scope>INDUCTION</scope>
    <scope>PATHWAY</scope>
</reference>
<protein>
    <recommendedName>
        <fullName evidence="7">Phomenoic acid biosynthesis cluster cytochrome P450 monooxygenase</fullName>
        <ecNumber evidence="9">1.-.-.-</ecNumber>
    </recommendedName>
</protein>